<name>TTLL5_HUMAN</name>
<reference key="1">
    <citation type="journal article" date="2007" name="Mol. Cell. Biol.">
        <title>STAMP, a novel predicted factor assisting TIF2 actions in glucocorticoid receptor-mediated induction and repression.</title>
        <authorList>
            <person name="He Y."/>
            <person name="Simons S.S. Jr."/>
        </authorList>
    </citation>
    <scope>NUCLEOTIDE SEQUENCE [MRNA] (ISOFORM 1)</scope>
    <scope>FUNCTION</scope>
    <scope>SUBCELLULAR LOCATION</scope>
    <scope>INTERACTION WITH NCOA1 AND NCOA2</scope>
    <scope>TISSUE SPECIFICITY</scope>
    <scope>VARIANTS VAL-149 AND SER-1267</scope>
    <source>
        <tissue>Testis</tissue>
    </source>
</reference>
<reference key="2">
    <citation type="journal article" date="2003" name="Nature">
        <title>The DNA sequence and analysis of human chromosome 14.</title>
        <authorList>
            <person name="Heilig R."/>
            <person name="Eckenberg R."/>
            <person name="Petit J.-L."/>
            <person name="Fonknechten N."/>
            <person name="Da Silva C."/>
            <person name="Cattolico L."/>
            <person name="Levy M."/>
            <person name="Barbe V."/>
            <person name="De Berardinis V."/>
            <person name="Ureta-Vidal A."/>
            <person name="Pelletier E."/>
            <person name="Vico V."/>
            <person name="Anthouard V."/>
            <person name="Rowen L."/>
            <person name="Madan A."/>
            <person name="Qin S."/>
            <person name="Sun H."/>
            <person name="Du H."/>
            <person name="Pepin K."/>
            <person name="Artiguenave F."/>
            <person name="Robert C."/>
            <person name="Cruaud C."/>
            <person name="Bruels T."/>
            <person name="Jaillon O."/>
            <person name="Friedlander L."/>
            <person name="Samson G."/>
            <person name="Brottier P."/>
            <person name="Cure S."/>
            <person name="Segurens B."/>
            <person name="Aniere F."/>
            <person name="Samain S."/>
            <person name="Crespeau H."/>
            <person name="Abbasi N."/>
            <person name="Aiach N."/>
            <person name="Boscus D."/>
            <person name="Dickhoff R."/>
            <person name="Dors M."/>
            <person name="Dubois I."/>
            <person name="Friedman C."/>
            <person name="Gouyvenoux M."/>
            <person name="James R."/>
            <person name="Madan A."/>
            <person name="Mairey-Estrada B."/>
            <person name="Mangenot S."/>
            <person name="Martins N."/>
            <person name="Menard M."/>
            <person name="Oztas S."/>
            <person name="Ratcliffe A."/>
            <person name="Shaffer T."/>
            <person name="Trask B."/>
            <person name="Vacherie B."/>
            <person name="Bellemere C."/>
            <person name="Belser C."/>
            <person name="Besnard-Gonnet M."/>
            <person name="Bartol-Mavel D."/>
            <person name="Boutard M."/>
            <person name="Briez-Silla S."/>
            <person name="Combette S."/>
            <person name="Dufosse-Laurent V."/>
            <person name="Ferron C."/>
            <person name="Lechaplais C."/>
            <person name="Louesse C."/>
            <person name="Muselet D."/>
            <person name="Magdelenat G."/>
            <person name="Pateau E."/>
            <person name="Petit E."/>
            <person name="Sirvain-Trukniewicz P."/>
            <person name="Trybou A."/>
            <person name="Vega-Czarny N."/>
            <person name="Bataille E."/>
            <person name="Bluet E."/>
            <person name="Bordelais I."/>
            <person name="Dubois M."/>
            <person name="Dumont C."/>
            <person name="Guerin T."/>
            <person name="Haffray S."/>
            <person name="Hammadi R."/>
            <person name="Muanga J."/>
            <person name="Pellouin V."/>
            <person name="Robert D."/>
            <person name="Wunderle E."/>
            <person name="Gauguet G."/>
            <person name="Roy A."/>
            <person name="Sainte-Marthe L."/>
            <person name="Verdier J."/>
            <person name="Verdier-Discala C."/>
            <person name="Hillier L.W."/>
            <person name="Fulton L."/>
            <person name="McPherson J."/>
            <person name="Matsuda F."/>
            <person name="Wilson R."/>
            <person name="Scarpelli C."/>
            <person name="Gyapay G."/>
            <person name="Wincker P."/>
            <person name="Saurin W."/>
            <person name="Quetier F."/>
            <person name="Waterston R."/>
            <person name="Hood L."/>
            <person name="Weissenbach J."/>
        </authorList>
    </citation>
    <scope>NUCLEOTIDE SEQUENCE [LARGE SCALE GENOMIC DNA]</scope>
</reference>
<reference key="3">
    <citation type="submission" date="2005-07" db="EMBL/GenBank/DDBJ databases">
        <authorList>
            <person name="Mural R.J."/>
            <person name="Istrail S."/>
            <person name="Sutton G.G."/>
            <person name="Florea L."/>
            <person name="Halpern A.L."/>
            <person name="Mobarry C.M."/>
            <person name="Lippert R."/>
            <person name="Walenz B."/>
            <person name="Shatkay H."/>
            <person name="Dew I."/>
            <person name="Miller J.R."/>
            <person name="Flanigan M.J."/>
            <person name="Edwards N.J."/>
            <person name="Bolanos R."/>
            <person name="Fasulo D."/>
            <person name="Halldorsson B.V."/>
            <person name="Hannenhalli S."/>
            <person name="Turner R."/>
            <person name="Yooseph S."/>
            <person name="Lu F."/>
            <person name="Nusskern D.R."/>
            <person name="Shue B.C."/>
            <person name="Zheng X.H."/>
            <person name="Zhong F."/>
            <person name="Delcher A.L."/>
            <person name="Huson D.H."/>
            <person name="Kravitz S.A."/>
            <person name="Mouchard L."/>
            <person name="Reinert K."/>
            <person name="Remington K.A."/>
            <person name="Clark A.G."/>
            <person name="Waterman M.S."/>
            <person name="Eichler E.E."/>
            <person name="Adams M.D."/>
            <person name="Hunkapiller M.W."/>
            <person name="Myers E.W."/>
            <person name="Venter J.C."/>
        </authorList>
    </citation>
    <scope>NUCLEOTIDE SEQUENCE [LARGE SCALE GENOMIC DNA]</scope>
    <scope>VARIANT VAL-149</scope>
</reference>
<reference key="4">
    <citation type="journal article" date="2001" name="Genome Res.">
        <title>Towards a catalog of human genes and proteins: sequencing and analysis of 500 novel complete protein coding human cDNAs.</title>
        <authorList>
            <person name="Wiemann S."/>
            <person name="Weil B."/>
            <person name="Wellenreuther R."/>
            <person name="Gassenhuber J."/>
            <person name="Glassl S."/>
            <person name="Ansorge W."/>
            <person name="Boecher M."/>
            <person name="Bloecker H."/>
            <person name="Bauersachs S."/>
            <person name="Blum H."/>
            <person name="Lauber J."/>
            <person name="Duesterhoeft A."/>
            <person name="Beyer A."/>
            <person name="Koehrer K."/>
            <person name="Strack N."/>
            <person name="Mewes H.-W."/>
            <person name="Ottenwaelder B."/>
            <person name="Obermaier B."/>
            <person name="Tampe J."/>
            <person name="Heubner D."/>
            <person name="Wambutt R."/>
            <person name="Korn B."/>
            <person name="Klein M."/>
            <person name="Poustka A."/>
        </authorList>
    </citation>
    <scope>NUCLEOTIDE SEQUENCE [LARGE SCALE MRNA] (ISOFORM 2)</scope>
    <source>
        <tissue>Testis</tissue>
    </source>
</reference>
<reference key="5">
    <citation type="submission" date="2004-06" db="EMBL/GenBank/DDBJ databases">
        <title>Cloning of human full open reading frames in Gateway(TM) system entry vector (pDONR201).</title>
        <authorList>
            <person name="Ebert L."/>
            <person name="Schick M."/>
            <person name="Neubert P."/>
            <person name="Schatten R."/>
            <person name="Henze S."/>
            <person name="Korn B."/>
        </authorList>
    </citation>
    <scope>NUCLEOTIDE SEQUENCE [LARGE SCALE MRNA] (ISOFORM 2)</scope>
</reference>
<reference key="6">
    <citation type="journal article" date="2004" name="Genome Res.">
        <title>The status, quality, and expansion of the NIH full-length cDNA project: the Mammalian Gene Collection (MGC).</title>
        <authorList>
            <consortium name="The MGC Project Team"/>
        </authorList>
    </citation>
    <scope>NUCLEOTIDE SEQUENCE [LARGE SCALE MRNA] (ISOFORMS 1 AND 3)</scope>
    <scope>VARIANT VAL-149</scope>
    <source>
        <tissue>Brain</tissue>
        <tissue>Testis</tissue>
        <tissue>Uterus</tissue>
    </source>
</reference>
<reference key="7">
    <citation type="journal article" date="2004" name="Nat. Genet.">
        <title>Complete sequencing and characterization of 21,243 full-length human cDNAs.</title>
        <authorList>
            <person name="Ota T."/>
            <person name="Suzuki Y."/>
            <person name="Nishikawa T."/>
            <person name="Otsuki T."/>
            <person name="Sugiyama T."/>
            <person name="Irie R."/>
            <person name="Wakamatsu A."/>
            <person name="Hayashi K."/>
            <person name="Sato H."/>
            <person name="Nagai K."/>
            <person name="Kimura K."/>
            <person name="Makita H."/>
            <person name="Sekine M."/>
            <person name="Obayashi M."/>
            <person name="Nishi T."/>
            <person name="Shibahara T."/>
            <person name="Tanaka T."/>
            <person name="Ishii S."/>
            <person name="Yamamoto J."/>
            <person name="Saito K."/>
            <person name="Kawai Y."/>
            <person name="Isono Y."/>
            <person name="Nakamura Y."/>
            <person name="Nagahari K."/>
            <person name="Murakami K."/>
            <person name="Yasuda T."/>
            <person name="Iwayanagi T."/>
            <person name="Wagatsuma M."/>
            <person name="Shiratori A."/>
            <person name="Sudo H."/>
            <person name="Hosoiri T."/>
            <person name="Kaku Y."/>
            <person name="Kodaira H."/>
            <person name="Kondo H."/>
            <person name="Sugawara M."/>
            <person name="Takahashi M."/>
            <person name="Kanda K."/>
            <person name="Yokoi T."/>
            <person name="Furuya T."/>
            <person name="Kikkawa E."/>
            <person name="Omura Y."/>
            <person name="Abe K."/>
            <person name="Kamihara K."/>
            <person name="Katsuta N."/>
            <person name="Sato K."/>
            <person name="Tanikawa M."/>
            <person name="Yamazaki M."/>
            <person name="Ninomiya K."/>
            <person name="Ishibashi T."/>
            <person name="Yamashita H."/>
            <person name="Murakawa K."/>
            <person name="Fujimori K."/>
            <person name="Tanai H."/>
            <person name="Kimata M."/>
            <person name="Watanabe M."/>
            <person name="Hiraoka S."/>
            <person name="Chiba Y."/>
            <person name="Ishida S."/>
            <person name="Ono Y."/>
            <person name="Takiguchi S."/>
            <person name="Watanabe S."/>
            <person name="Yosida M."/>
            <person name="Hotuta T."/>
            <person name="Kusano J."/>
            <person name="Kanehori K."/>
            <person name="Takahashi-Fujii A."/>
            <person name="Hara H."/>
            <person name="Tanase T.-O."/>
            <person name="Nomura Y."/>
            <person name="Togiya S."/>
            <person name="Komai F."/>
            <person name="Hara R."/>
            <person name="Takeuchi K."/>
            <person name="Arita M."/>
            <person name="Imose N."/>
            <person name="Musashino K."/>
            <person name="Yuuki H."/>
            <person name="Oshima A."/>
            <person name="Sasaki N."/>
            <person name="Aotsuka S."/>
            <person name="Yoshikawa Y."/>
            <person name="Matsunawa H."/>
            <person name="Ichihara T."/>
            <person name="Shiohata N."/>
            <person name="Sano S."/>
            <person name="Moriya S."/>
            <person name="Momiyama H."/>
            <person name="Satoh N."/>
            <person name="Takami S."/>
            <person name="Terashima Y."/>
            <person name="Suzuki O."/>
            <person name="Nakagawa S."/>
            <person name="Senoh A."/>
            <person name="Mizoguchi H."/>
            <person name="Goto Y."/>
            <person name="Shimizu F."/>
            <person name="Wakebe H."/>
            <person name="Hishigaki H."/>
            <person name="Watanabe T."/>
            <person name="Sugiyama A."/>
            <person name="Takemoto M."/>
            <person name="Kawakami B."/>
            <person name="Yamazaki M."/>
            <person name="Watanabe K."/>
            <person name="Kumagai A."/>
            <person name="Itakura S."/>
            <person name="Fukuzumi Y."/>
            <person name="Fujimori Y."/>
            <person name="Komiyama M."/>
            <person name="Tashiro H."/>
            <person name="Tanigami A."/>
            <person name="Fujiwara T."/>
            <person name="Ono T."/>
            <person name="Yamada K."/>
            <person name="Fujii Y."/>
            <person name="Ozaki K."/>
            <person name="Hirao M."/>
            <person name="Ohmori Y."/>
            <person name="Kawabata A."/>
            <person name="Hikiji T."/>
            <person name="Kobatake N."/>
            <person name="Inagaki H."/>
            <person name="Ikema Y."/>
            <person name="Okamoto S."/>
            <person name="Okitani R."/>
            <person name="Kawakami T."/>
            <person name="Noguchi S."/>
            <person name="Itoh T."/>
            <person name="Shigeta K."/>
            <person name="Senba T."/>
            <person name="Matsumura K."/>
            <person name="Nakajima Y."/>
            <person name="Mizuno T."/>
            <person name="Morinaga M."/>
            <person name="Sasaki M."/>
            <person name="Togashi T."/>
            <person name="Oyama M."/>
            <person name="Hata H."/>
            <person name="Watanabe M."/>
            <person name="Komatsu T."/>
            <person name="Mizushima-Sugano J."/>
            <person name="Satoh T."/>
            <person name="Shirai Y."/>
            <person name="Takahashi Y."/>
            <person name="Nakagawa K."/>
            <person name="Okumura K."/>
            <person name="Nagase T."/>
            <person name="Nomura N."/>
            <person name="Kikuchi H."/>
            <person name="Masuho Y."/>
            <person name="Yamashita R."/>
            <person name="Nakai K."/>
            <person name="Yada T."/>
            <person name="Nakamura Y."/>
            <person name="Ohara O."/>
            <person name="Isogai T."/>
            <person name="Sugano S."/>
        </authorList>
    </citation>
    <scope>NUCLEOTIDE SEQUENCE [LARGE SCALE MRNA] OF 24-1281 (ISOFORM 3)</scope>
    <source>
        <tissue>Teratocarcinoma</tissue>
    </source>
</reference>
<reference key="8">
    <citation type="journal article" date="1999" name="DNA Res.">
        <title>Prediction of the coding sequences of unidentified human genes. XIII. The complete sequences of 100 new cDNA clones from brain which code for large proteins in vitro.</title>
        <authorList>
            <person name="Nagase T."/>
            <person name="Ishikawa K."/>
            <person name="Suyama M."/>
            <person name="Kikuno R."/>
            <person name="Hirosawa M."/>
            <person name="Miyajima N."/>
            <person name="Tanaka A."/>
            <person name="Kotani H."/>
            <person name="Nomura N."/>
            <person name="Ohara O."/>
        </authorList>
    </citation>
    <scope>NUCLEOTIDE SEQUENCE [LARGE SCALE MRNA] OF 56-1281 (ISOFORM 1)</scope>
    <scope>VARIANTS VAL-149 AND SER-1267</scope>
    <source>
        <tissue>Brain</tissue>
    </source>
</reference>
<reference key="9">
    <citation type="journal article" date="2012" name="Mol. Biol. Cell">
        <title>CSAP localizes to polyglutamylated microtubules and promotes proper cilia function and zebrafish development.</title>
        <authorList>
            <person name="Backer C.B."/>
            <person name="Gutzman J.H."/>
            <person name="Pearson C.G."/>
            <person name="Cheeseman I.M."/>
        </authorList>
    </citation>
    <scope>FUNCTION</scope>
</reference>
<reference key="10">
    <citation type="journal article" date="2014" name="Am. J. Hum. Genet.">
        <title>Biallelic variants in TTLL5, encoding a tubulin glutamylase, cause retinal dystrophy.</title>
        <authorList>
            <consortium name="UCL-Exomes Consortium"/>
            <person name="Sergouniotis P.I."/>
            <person name="Chakarova C."/>
            <person name="Murphy C."/>
            <person name="Becker M."/>
            <person name="Lenassi E."/>
            <person name="Arno G."/>
            <person name="Lek M."/>
            <person name="MacArthur D.G."/>
            <person name="Bhattacharya S.S."/>
            <person name="Moore A.T."/>
            <person name="Holder G.E."/>
            <person name="Robson A.G."/>
            <person name="Wolfrum U."/>
            <person name="Webster A.R."/>
            <person name="Plagnol V."/>
        </authorList>
    </citation>
    <scope>INVOLVEMENT IN CORD19</scope>
    <scope>VARIANT CORD19 LYS-543</scope>
    <scope>SUBCELLULAR LOCATION</scope>
    <scope>TISSUE SPECIFICITY</scope>
</reference>
<reference key="11">
    <citation type="journal article" date="2015" name="Cell">
        <title>Multivalent microtubule recognition by tubulin tyrosine ligase-like family glutamylases.</title>
        <authorList>
            <person name="Garnham C.P."/>
            <person name="Vemu A."/>
            <person name="Wilson-Kubalek E.M."/>
            <person name="Yu I."/>
            <person name="Szyk A."/>
            <person name="Lander G.C."/>
            <person name="Milligan R.A."/>
            <person name="Roll-Mecak A."/>
        </authorList>
    </citation>
    <scope>DOMAIN</scope>
    <scope>MUTAGENESIS OF 467-LYS--LYS-473</scope>
</reference>
<comment type="function">
    <text evidence="3 8 9">Polyglutamylase which modifies tubulin, generating polyglutamate side chains on the gamma-carboxyl group of specific glutamate residues within the C-terminal tail of tubulin. Preferentially mediates ATP-dependent initiation step of the polyglutamylation reaction over the elongation step. Preferentially modifies the alpha-tubulin tail over a beta-tail (By similarity). Required for CCSAP localization to both polyglutamylated spindle and cilia microtubules (PubMed:22493317). Increases the effects of transcriptional coactivator NCOA2/TIF2 in glucocorticoid receptor-mediated repression and induction and in androgen receptor-mediated induction (PubMed:17116691).</text>
</comment>
<comment type="catalytic activity">
    <reaction evidence="3">
        <text>L-glutamyl-[protein] + L-glutamate + ATP = gamma-L-glutamyl-L-glutamyl-[protein] + ADP + phosphate + H(+)</text>
        <dbReference type="Rhea" id="RHEA:60144"/>
        <dbReference type="Rhea" id="RHEA-COMP:10208"/>
        <dbReference type="Rhea" id="RHEA-COMP:15517"/>
        <dbReference type="ChEBI" id="CHEBI:15378"/>
        <dbReference type="ChEBI" id="CHEBI:29973"/>
        <dbReference type="ChEBI" id="CHEBI:29985"/>
        <dbReference type="ChEBI" id="CHEBI:30616"/>
        <dbReference type="ChEBI" id="CHEBI:43474"/>
        <dbReference type="ChEBI" id="CHEBI:143622"/>
        <dbReference type="ChEBI" id="CHEBI:456216"/>
    </reaction>
    <physiologicalReaction direction="left-to-right" evidence="3">
        <dbReference type="Rhea" id="RHEA:60145"/>
    </physiologicalReaction>
</comment>
<comment type="catalytic activity">
    <reaction evidence="3">
        <text>(L-glutamyl)(n)-gamma-L-glutamyl-L-glutamyl-[protein] + L-glutamate + ATP = (L-glutamyl)(n+1)-gamma-L-glutamyl-L-glutamyl-[protein] + ADP + phosphate + H(+)</text>
        <dbReference type="Rhea" id="RHEA:60148"/>
        <dbReference type="Rhea" id="RHEA-COMP:15519"/>
        <dbReference type="Rhea" id="RHEA-COMP:15675"/>
        <dbReference type="ChEBI" id="CHEBI:15378"/>
        <dbReference type="ChEBI" id="CHEBI:29985"/>
        <dbReference type="ChEBI" id="CHEBI:30616"/>
        <dbReference type="ChEBI" id="CHEBI:43474"/>
        <dbReference type="ChEBI" id="CHEBI:143623"/>
        <dbReference type="ChEBI" id="CHEBI:456216"/>
    </reaction>
    <physiologicalReaction direction="left-to-right" evidence="3">
        <dbReference type="Rhea" id="RHEA:60149"/>
    </physiologicalReaction>
</comment>
<comment type="cofactor">
    <cofactor evidence="1">
        <name>Mg(2+)</name>
        <dbReference type="ChEBI" id="CHEBI:18420"/>
    </cofactor>
</comment>
<comment type="subunit">
    <text evidence="8">Interacts with the transcriptional coactivators NCOA1/SRC-1 and NCOA2/TIF2.</text>
</comment>
<comment type="subcellular location">
    <subcellularLocation>
        <location evidence="10">Cell projection</location>
        <location evidence="10">Cilium</location>
    </subcellularLocation>
    <subcellularLocation>
        <location evidence="3">Cytoplasm</location>
        <location evidence="3">Cytoskeleton</location>
        <location evidence="3">Cilium basal body</location>
    </subcellularLocation>
    <subcellularLocation>
        <location evidence="8">Nucleus</location>
    </subcellularLocation>
    <subcellularLocation>
        <location evidence="8">Cytoplasm</location>
    </subcellularLocation>
    <text evidence="3 10">Localized to the base of the connecting cilium between the basal body and the adjacent daughter centriole of the cilium. In osteosarcoma cells, found in both cytoplasm and nucleus in the absence of steroid but located exclusively in the nucleus in the presence of steroid.</text>
</comment>
<comment type="alternative products">
    <event type="alternative splicing"/>
    <isoform>
        <id>Q6EMB2-1</id>
        <name>1</name>
        <sequence type="displayed"/>
    </isoform>
    <isoform>
        <id>Q6EMB2-2</id>
        <name>2</name>
        <sequence type="described" ref="VSP_037453 VSP_037456 VSP_037457"/>
    </isoform>
    <isoform>
        <id>Q6EMB2-3</id>
        <name>3</name>
        <sequence type="described" ref="VSP_037454 VSP_037455"/>
    </isoform>
</comment>
<comment type="tissue specificity">
    <text evidence="8 10">Expressed in the retina, found in the rod and cone photoreceptors (at protein level). Widely expressed with highest levels in heart and skeletal muscle and low levels in other tissues.</text>
</comment>
<comment type="domain">
    <text evidence="2 11">The flexible c-MTBD (cationic microtubule binding domain) region mediates binding to microtubules. It is positively charged and becomes ordered when bound to microtubules: it interacts with a negatively charged patch on tubulin. The presence of positive charges in the c-MTBD region is essential for proper binding.</text>
</comment>
<comment type="domain">
    <text evidence="1">Arg-186 is the main determinant for regioselectivity, which segregates between initiases and elongases in all tubulin--tyrosine ligase family. A glutamine residue at this position is found in elongases TTLL6, TTLL9, TTLL11, TTLL13, TTLL10 and favors glutamate-chain elongation, whereas an arginine residue is found in initiases TTLL2, TTLL4, TTLL5, TTLL3, TTLL8 and favors initiation.</text>
</comment>
<comment type="disease" evidence="10">
    <disease id="DI-04129">
        <name>Cone-rod dystrophy 19</name>
        <acronym>CORD19</acronym>
        <description>A form of cone-rod dystrophy, an inherited retinal dystrophy characterized by retinal pigment deposits visible on fundus examination, predominantly in the macular region, and initial loss of cone photoreceptors followed by rod degeneration. This leads to decreased visual acuity and sensitivity in the central visual field, followed by loss of peripheral vision. Severe loss of vision occurs earlier than in retinitis pigmentosa, due to cone photoreceptors degenerating at a higher rate than rod photoreceptors.</description>
        <dbReference type="MIM" id="615860"/>
    </disease>
    <text>The disease is caused by variants affecting the gene represented in this entry.</text>
</comment>
<comment type="similarity">
    <text evidence="18">Belongs to the tubulin--tyrosine ligase family.</text>
</comment>
<comment type="sequence caution" evidence="18">
    <conflict type="erroneous gene model prediction">
        <sequence resource="EMBL-CDS" id="AAF23275"/>
    </conflict>
</comment>
<comment type="sequence caution" evidence="18">
    <conflict type="erroneous initiation">
        <sequence resource="EMBL-CDS" id="AAP75557"/>
    </conflict>
    <text>Truncated N-terminus.</text>
</comment>
<keyword id="KW-0025">Alternative splicing</keyword>
<keyword id="KW-0067">ATP-binding</keyword>
<keyword id="KW-0966">Cell projection</keyword>
<keyword id="KW-0969">Cilium</keyword>
<keyword id="KW-0182">Cone-rod dystrophy</keyword>
<keyword id="KW-0963">Cytoplasm</keyword>
<keyword id="KW-0206">Cytoskeleton</keyword>
<keyword id="KW-0225">Disease variant</keyword>
<keyword id="KW-0436">Ligase</keyword>
<keyword id="KW-0460">Magnesium</keyword>
<keyword id="KW-0479">Metal-binding</keyword>
<keyword id="KW-0493">Microtubule</keyword>
<keyword id="KW-0547">Nucleotide-binding</keyword>
<keyword id="KW-0539">Nucleus</keyword>
<keyword id="KW-1267">Proteomics identification</keyword>
<keyword id="KW-1185">Reference proteome</keyword>
<keyword id="KW-0804">Transcription</keyword>
<feature type="chain" id="PRO_0000223341" description="Tubulin polyglutamylase TTLL5">
    <location>
        <begin position="1"/>
        <end position="1281"/>
    </location>
</feature>
<feature type="domain" description="TTL" evidence="4">
    <location>
        <begin position="62"/>
        <end position="407"/>
    </location>
</feature>
<feature type="region of interest" description="c-MTBD region" evidence="11">
    <location>
        <begin position="378"/>
        <end position="488"/>
    </location>
</feature>
<feature type="region of interest" description="Disordered" evidence="5">
    <location>
        <begin position="577"/>
        <end position="614"/>
    </location>
</feature>
<feature type="region of interest" description="Disordered" evidence="5">
    <location>
        <begin position="1072"/>
        <end position="1114"/>
    </location>
</feature>
<feature type="region of interest" description="Disordered" evidence="5">
    <location>
        <begin position="1199"/>
        <end position="1281"/>
    </location>
</feature>
<feature type="compositionally biased region" description="Acidic residues" evidence="5">
    <location>
        <begin position="584"/>
        <end position="604"/>
    </location>
</feature>
<feature type="compositionally biased region" description="Polar residues" evidence="5">
    <location>
        <begin position="1086"/>
        <end position="1113"/>
    </location>
</feature>
<feature type="compositionally biased region" description="Polar residues" evidence="5">
    <location>
        <begin position="1199"/>
        <end position="1212"/>
    </location>
</feature>
<feature type="compositionally biased region" description="Polar residues" evidence="5">
    <location>
        <begin position="1240"/>
        <end position="1263"/>
    </location>
</feature>
<feature type="compositionally biased region" description="Polar residues" evidence="5">
    <location>
        <begin position="1270"/>
        <end position="1281"/>
    </location>
</feature>
<feature type="binding site" evidence="1">
    <location>
        <position position="180"/>
    </location>
    <ligand>
        <name>ATP</name>
        <dbReference type="ChEBI" id="CHEBI:30616"/>
    </ligand>
</feature>
<feature type="binding site" evidence="1">
    <location>
        <begin position="186"/>
        <end position="187"/>
    </location>
    <ligand>
        <name>ATP</name>
        <dbReference type="ChEBI" id="CHEBI:30616"/>
    </ligand>
</feature>
<feature type="binding site" evidence="1">
    <location>
        <position position="186"/>
    </location>
    <ligand>
        <name>a protein</name>
        <dbReference type="ChEBI" id="CHEBI:16541"/>
    </ligand>
    <ligandPart>
        <name>L-glutamate residue</name>
        <dbReference type="ChEBI" id="CHEBI:29973"/>
        <note>L-glutamate acceptor residue in protein target</note>
    </ligandPart>
</feature>
<feature type="binding site" evidence="1">
    <location>
        <begin position="208"/>
        <end position="211"/>
    </location>
    <ligand>
        <name>ATP</name>
        <dbReference type="ChEBI" id="CHEBI:30616"/>
    </ligand>
</feature>
<feature type="binding site" evidence="1">
    <location>
        <begin position="221"/>
        <end position="223"/>
    </location>
    <ligand>
        <name>ATP</name>
        <dbReference type="ChEBI" id="CHEBI:30616"/>
    </ligand>
</feature>
<feature type="binding site" evidence="1">
    <location>
        <position position="247"/>
    </location>
    <ligand>
        <name>L-glutamate</name>
        <dbReference type="ChEBI" id="CHEBI:29985"/>
    </ligand>
</feature>
<feature type="binding site" evidence="1">
    <location>
        <begin position="268"/>
        <end position="269"/>
    </location>
    <ligand>
        <name>ATP</name>
        <dbReference type="ChEBI" id="CHEBI:30616"/>
    </ligand>
</feature>
<feature type="binding site" evidence="1">
    <location>
        <position position="270"/>
    </location>
    <ligand>
        <name>L-glutamate</name>
        <dbReference type="ChEBI" id="CHEBI:29985"/>
    </ligand>
</feature>
<feature type="binding site" evidence="1">
    <location>
        <position position="271"/>
    </location>
    <ligand>
        <name>L-glutamate</name>
        <dbReference type="ChEBI" id="CHEBI:29985"/>
    </ligand>
</feature>
<feature type="binding site" evidence="1">
    <location>
        <position position="293"/>
    </location>
    <ligand>
        <name>L-glutamate</name>
        <dbReference type="ChEBI" id="CHEBI:29985"/>
    </ligand>
</feature>
<feature type="binding site" evidence="1">
    <location>
        <position position="353"/>
    </location>
    <ligand>
        <name>Mg(2+)</name>
        <dbReference type="ChEBI" id="CHEBI:18420"/>
        <label>1</label>
    </ligand>
</feature>
<feature type="binding site" evidence="1">
    <location>
        <position position="366"/>
    </location>
    <ligand>
        <name>Mg(2+)</name>
        <dbReference type="ChEBI" id="CHEBI:18420"/>
        <label>1</label>
    </ligand>
</feature>
<feature type="binding site" evidence="1">
    <location>
        <position position="366"/>
    </location>
    <ligand>
        <name>Mg(2+)</name>
        <dbReference type="ChEBI" id="CHEBI:18420"/>
        <label>2</label>
    </ligand>
</feature>
<feature type="binding site" evidence="1">
    <location>
        <position position="368"/>
    </location>
    <ligand>
        <name>Mg(2+)</name>
        <dbReference type="ChEBI" id="CHEBI:18420"/>
        <label>2</label>
    </ligand>
</feature>
<feature type="binding site" evidence="1">
    <location>
        <position position="384"/>
    </location>
    <ligand>
        <name>L-glutamate</name>
        <dbReference type="ChEBI" id="CHEBI:29985"/>
    </ligand>
</feature>
<feature type="site" description="Essential for specifying initiation versus elongation step of the polyglutamylase activity" evidence="1">
    <location>
        <position position="186"/>
    </location>
</feature>
<feature type="splice variant" id="VSP_037453" description="In isoform 2." evidence="13 17">
    <location>
        <begin position="1"/>
        <end position="462"/>
    </location>
</feature>
<feature type="splice variant" id="VSP_037454" description="In isoform 3." evidence="14 15">
    <original>FATVRYDQGAKNIRNQFMHLTN</original>
    <variation>KCNWKMGNTMDKRRLPIYVQVL</variation>
    <location>
        <begin position="248"/>
        <end position="269"/>
    </location>
</feature>
<feature type="splice variant" id="VSP_037455" description="In isoform 3." evidence="14 15">
    <location>
        <begin position="270"/>
        <end position="1281"/>
    </location>
</feature>
<feature type="splice variant" id="VSP_037456" description="In isoform 2." evidence="13 17">
    <original>D</original>
    <variation>DRGNPRRSLLTGRT</variation>
    <location>
        <position position="516"/>
    </location>
</feature>
<feature type="splice variant" id="VSP_037457" description="In isoform 2." evidence="13 17">
    <original>KGSSAEGQLNGLQSSLNPAAFVPITSSTDPAHTKI</original>
    <variation>NTRFRSSFQNYLWYFFQAVS</variation>
    <location>
        <begin position="1247"/>
        <end position="1281"/>
    </location>
</feature>
<feature type="sequence variant" id="VAR_057895" description="In dbSNP:rs2303345." evidence="6 7 8 12">
    <original>A</original>
    <variation>V</variation>
    <location>
        <position position="149"/>
    </location>
</feature>
<feature type="sequence variant" id="VAR_057896" description="In dbSNP:rs17856074.">
    <original>E</original>
    <variation>D</variation>
    <location>
        <position position="203"/>
    </location>
</feature>
<feature type="sequence variant" id="VAR_071327" description="In CORD19; dbSNP:rs199882533." evidence="10">
    <original>E</original>
    <variation>K</variation>
    <location>
        <position position="543"/>
    </location>
</feature>
<feature type="sequence variant" id="VAR_057897" description="In dbSNP:rs11848004.">
    <original>A</original>
    <variation>T</variation>
    <location>
        <position position="592"/>
    </location>
</feature>
<feature type="sequence variant" id="VAR_057898" description="In dbSNP:rs10130991.">
    <original>A</original>
    <variation>S</variation>
    <location>
        <position position="1223"/>
    </location>
</feature>
<feature type="sequence variant" id="VAR_057899" description="In dbSNP:rs11844617.">
    <original>P</original>
    <variation>T</variation>
    <location>
        <position position="1231"/>
    </location>
</feature>
<feature type="sequence variant" id="VAR_057900" description="In dbSNP:rs1133834." evidence="6 8">
    <original>F</original>
    <variation>S</variation>
    <location>
        <position position="1267"/>
    </location>
</feature>
<feature type="mutagenesis site" description="Decreased binding to microtubules and polyglutamylase activity." evidence="11">
    <original>KVLRRVK</original>
    <variation>DVLDDVD</variation>
    <location>
        <begin position="467"/>
        <end position="473"/>
    </location>
</feature>
<evidence type="ECO:0000250" key="1">
    <source>
        <dbReference type="UniProtKB" id="A4Q9E8"/>
    </source>
</evidence>
<evidence type="ECO:0000250" key="2">
    <source>
        <dbReference type="UniProtKB" id="Q6ZT98"/>
    </source>
</evidence>
<evidence type="ECO:0000250" key="3">
    <source>
        <dbReference type="UniProtKB" id="Q8CHB8"/>
    </source>
</evidence>
<evidence type="ECO:0000255" key="4">
    <source>
        <dbReference type="PROSITE-ProRule" id="PRU00568"/>
    </source>
</evidence>
<evidence type="ECO:0000256" key="5">
    <source>
        <dbReference type="SAM" id="MobiDB-lite"/>
    </source>
</evidence>
<evidence type="ECO:0000269" key="6">
    <source>
    </source>
</evidence>
<evidence type="ECO:0000269" key="7">
    <source>
    </source>
</evidence>
<evidence type="ECO:0000269" key="8">
    <source>
    </source>
</evidence>
<evidence type="ECO:0000269" key="9">
    <source>
    </source>
</evidence>
<evidence type="ECO:0000269" key="10">
    <source>
    </source>
</evidence>
<evidence type="ECO:0000269" key="11">
    <source>
    </source>
</evidence>
<evidence type="ECO:0000269" key="12">
    <source ref="3"/>
</evidence>
<evidence type="ECO:0000303" key="13">
    <source>
    </source>
</evidence>
<evidence type="ECO:0000303" key="14">
    <source>
    </source>
</evidence>
<evidence type="ECO:0000303" key="15">
    <source>
    </source>
</evidence>
<evidence type="ECO:0000303" key="16">
    <source>
    </source>
</evidence>
<evidence type="ECO:0000303" key="17">
    <source ref="5"/>
</evidence>
<evidence type="ECO:0000305" key="18"/>
<evidence type="ECO:0000312" key="19">
    <source>
        <dbReference type="HGNC" id="HGNC:19963"/>
    </source>
</evidence>
<proteinExistence type="evidence at protein level"/>
<dbReference type="EC" id="6.3.2.-" evidence="3"/>
<dbReference type="EMBL" id="AY237126">
    <property type="protein sequence ID" value="AAP75557.1"/>
    <property type="status" value="ALT_INIT"/>
    <property type="molecule type" value="mRNA"/>
</dbReference>
<dbReference type="EMBL" id="AC007182">
    <property type="status" value="NOT_ANNOTATED_CDS"/>
    <property type="molecule type" value="Genomic_DNA"/>
</dbReference>
<dbReference type="EMBL" id="AC009399">
    <property type="protein sequence ID" value="AAF23275.2"/>
    <property type="status" value="ALT_SEQ"/>
    <property type="molecule type" value="Genomic_DNA"/>
</dbReference>
<dbReference type="EMBL" id="AF107885">
    <property type="status" value="NOT_ANNOTATED_CDS"/>
    <property type="molecule type" value="Genomic_DNA"/>
</dbReference>
<dbReference type="EMBL" id="CH471061">
    <property type="protein sequence ID" value="EAW81247.1"/>
    <property type="molecule type" value="Genomic_DNA"/>
</dbReference>
<dbReference type="EMBL" id="CR533554">
    <property type="protein sequence ID" value="CAG38585.1"/>
    <property type="molecule type" value="mRNA"/>
</dbReference>
<dbReference type="EMBL" id="AL136808">
    <property type="protein sequence ID" value="CAB66742.1"/>
    <property type="molecule type" value="mRNA"/>
</dbReference>
<dbReference type="EMBL" id="BC002766">
    <property type="protein sequence ID" value="AAH02766.2"/>
    <property type="molecule type" value="mRNA"/>
</dbReference>
<dbReference type="EMBL" id="BC136472">
    <property type="protein sequence ID" value="AAI36473.1"/>
    <property type="molecule type" value="mRNA"/>
</dbReference>
<dbReference type="EMBL" id="BC136473">
    <property type="protein sequence ID" value="AAI36474.1"/>
    <property type="molecule type" value="mRNA"/>
</dbReference>
<dbReference type="EMBL" id="AK024259">
    <property type="protein sequence ID" value="BAB14862.1"/>
    <property type="molecule type" value="mRNA"/>
</dbReference>
<dbReference type="EMBL" id="AB023215">
    <property type="protein sequence ID" value="BAA76842.1"/>
    <property type="molecule type" value="mRNA"/>
</dbReference>
<dbReference type="CCDS" id="CCDS32124.1">
    <molecule id="Q6EMB2-1"/>
</dbReference>
<dbReference type="RefSeq" id="NP_055887.3">
    <molecule id="Q6EMB2-1"/>
    <property type="nucleotide sequence ID" value="NM_015072.4"/>
</dbReference>
<dbReference type="SMR" id="Q6EMB2"/>
<dbReference type="BioGRID" id="116721">
    <property type="interactions" value="57"/>
</dbReference>
<dbReference type="FunCoup" id="Q6EMB2">
    <property type="interactions" value="1700"/>
</dbReference>
<dbReference type="IntAct" id="Q6EMB2">
    <property type="interactions" value="41"/>
</dbReference>
<dbReference type="MINT" id="Q6EMB2"/>
<dbReference type="STRING" id="9606.ENSP00000298832"/>
<dbReference type="GlyCosmos" id="Q6EMB2">
    <property type="glycosylation" value="1 site, 1 glycan"/>
</dbReference>
<dbReference type="GlyGen" id="Q6EMB2">
    <property type="glycosylation" value="3 sites, 1 O-linked glycan (1 site)"/>
</dbReference>
<dbReference type="iPTMnet" id="Q6EMB2"/>
<dbReference type="PhosphoSitePlus" id="Q6EMB2"/>
<dbReference type="BioMuta" id="TTLL5"/>
<dbReference type="DMDM" id="239938834"/>
<dbReference type="jPOST" id="Q6EMB2"/>
<dbReference type="MassIVE" id="Q6EMB2"/>
<dbReference type="PaxDb" id="9606-ENSP00000298832"/>
<dbReference type="PeptideAtlas" id="Q6EMB2"/>
<dbReference type="ProteomicsDB" id="66285">
    <molecule id="Q6EMB2-1"/>
</dbReference>
<dbReference type="ProteomicsDB" id="66286">
    <molecule id="Q6EMB2-2"/>
</dbReference>
<dbReference type="ProteomicsDB" id="66287">
    <molecule id="Q6EMB2-3"/>
</dbReference>
<dbReference type="Pumba" id="Q6EMB2"/>
<dbReference type="Antibodypedia" id="25856">
    <property type="antibodies" value="56 antibodies from 12 providers"/>
</dbReference>
<dbReference type="DNASU" id="23093"/>
<dbReference type="Ensembl" id="ENST00000286650.9">
    <molecule id="Q6EMB2-3"/>
    <property type="protein sequence ID" value="ENSP00000286650.5"/>
    <property type="gene ID" value="ENSG00000119685.20"/>
</dbReference>
<dbReference type="Ensembl" id="ENST00000298832.14">
    <molecule id="Q6EMB2-1"/>
    <property type="protein sequence ID" value="ENSP00000298832.9"/>
    <property type="gene ID" value="ENSG00000119685.20"/>
</dbReference>
<dbReference type="Ensembl" id="ENST00000556893.5">
    <molecule id="Q6EMB2-2"/>
    <property type="protein sequence ID" value="ENSP00000452524.1"/>
    <property type="gene ID" value="ENSG00000119685.20"/>
</dbReference>
<dbReference type="GeneID" id="23093"/>
<dbReference type="KEGG" id="hsa:23093"/>
<dbReference type="MANE-Select" id="ENST00000298832.14">
    <property type="protein sequence ID" value="ENSP00000298832.9"/>
    <property type="RefSeq nucleotide sequence ID" value="NM_015072.5"/>
    <property type="RefSeq protein sequence ID" value="NP_055887.3"/>
</dbReference>
<dbReference type="UCSC" id="uc001xrw.3">
    <molecule id="Q6EMB2-1"/>
    <property type="organism name" value="human"/>
</dbReference>
<dbReference type="AGR" id="HGNC:19963"/>
<dbReference type="CTD" id="23093"/>
<dbReference type="DisGeNET" id="23093"/>
<dbReference type="GeneCards" id="TTLL5"/>
<dbReference type="HGNC" id="HGNC:19963">
    <property type="gene designation" value="TTLL5"/>
</dbReference>
<dbReference type="HPA" id="ENSG00000119685">
    <property type="expression patterns" value="Tissue enhanced (testis)"/>
</dbReference>
<dbReference type="MalaCards" id="TTLL5"/>
<dbReference type="MIM" id="612268">
    <property type="type" value="gene"/>
</dbReference>
<dbReference type="MIM" id="615860">
    <property type="type" value="phenotype"/>
</dbReference>
<dbReference type="neXtProt" id="NX_Q6EMB2"/>
<dbReference type="OpenTargets" id="ENSG00000119685"/>
<dbReference type="Orphanet" id="1872">
    <property type="disease" value="Cone rod dystrophy"/>
</dbReference>
<dbReference type="PharmGKB" id="PA164742694"/>
<dbReference type="VEuPathDB" id="HostDB:ENSG00000119685"/>
<dbReference type="eggNOG" id="KOG2156">
    <property type="taxonomic scope" value="Eukaryota"/>
</dbReference>
<dbReference type="eggNOG" id="KOG2157">
    <property type="taxonomic scope" value="Eukaryota"/>
</dbReference>
<dbReference type="GeneTree" id="ENSGT00940000162939"/>
<dbReference type="HOGENOM" id="CLU_1034260_0_0_1"/>
<dbReference type="InParanoid" id="Q6EMB2"/>
<dbReference type="OrthoDB" id="2016263at2759"/>
<dbReference type="PAN-GO" id="Q6EMB2">
    <property type="GO annotations" value="5 GO annotations based on evolutionary models"/>
</dbReference>
<dbReference type="PhylomeDB" id="Q6EMB2"/>
<dbReference type="TreeFam" id="TF313087"/>
<dbReference type="PathwayCommons" id="Q6EMB2"/>
<dbReference type="Reactome" id="R-HSA-8955332">
    <property type="pathway name" value="Carboxyterminal post-translational modifications of tubulin"/>
</dbReference>
<dbReference type="SignaLink" id="Q6EMB2"/>
<dbReference type="BioGRID-ORCS" id="23093">
    <property type="hits" value="16 hits in 1159 CRISPR screens"/>
</dbReference>
<dbReference type="ChiTaRS" id="TTLL5">
    <property type="organism name" value="human"/>
</dbReference>
<dbReference type="GenomeRNAi" id="23093"/>
<dbReference type="Pharos" id="Q6EMB2">
    <property type="development level" value="Tbio"/>
</dbReference>
<dbReference type="PRO" id="PR:Q6EMB2"/>
<dbReference type="Proteomes" id="UP000005640">
    <property type="component" value="Chromosome 14"/>
</dbReference>
<dbReference type="RNAct" id="Q6EMB2">
    <property type="molecule type" value="protein"/>
</dbReference>
<dbReference type="Bgee" id="ENSG00000119685">
    <property type="expression patterns" value="Expressed in left testis and 207 other cell types or tissues"/>
</dbReference>
<dbReference type="ExpressionAtlas" id="Q6EMB2">
    <property type="expression patterns" value="baseline and differential"/>
</dbReference>
<dbReference type="GO" id="GO:0005813">
    <property type="term" value="C:centrosome"/>
    <property type="evidence" value="ECO:0000314"/>
    <property type="project" value="UniProtKB"/>
</dbReference>
<dbReference type="GO" id="GO:0036064">
    <property type="term" value="C:ciliary basal body"/>
    <property type="evidence" value="ECO:0000318"/>
    <property type="project" value="GO_Central"/>
</dbReference>
<dbReference type="GO" id="GO:0005829">
    <property type="term" value="C:cytosol"/>
    <property type="evidence" value="ECO:0000314"/>
    <property type="project" value="HPA"/>
</dbReference>
<dbReference type="GO" id="GO:0005874">
    <property type="term" value="C:microtubule"/>
    <property type="evidence" value="ECO:0007669"/>
    <property type="project" value="UniProtKB-KW"/>
</dbReference>
<dbReference type="GO" id="GO:0005634">
    <property type="term" value="C:nucleus"/>
    <property type="evidence" value="ECO:0007669"/>
    <property type="project" value="UniProtKB-SubCell"/>
</dbReference>
<dbReference type="GO" id="GO:0005886">
    <property type="term" value="C:plasma membrane"/>
    <property type="evidence" value="ECO:0000314"/>
    <property type="project" value="HPA"/>
</dbReference>
<dbReference type="GO" id="GO:0005524">
    <property type="term" value="F:ATP binding"/>
    <property type="evidence" value="ECO:0007669"/>
    <property type="project" value="UniProtKB-KW"/>
</dbReference>
<dbReference type="GO" id="GO:0046872">
    <property type="term" value="F:metal ion binding"/>
    <property type="evidence" value="ECO:0007669"/>
    <property type="project" value="UniProtKB-KW"/>
</dbReference>
<dbReference type="GO" id="GO:0106438">
    <property type="term" value="F:protein-glutamic acid ligase activity, elongating"/>
    <property type="evidence" value="ECO:0007669"/>
    <property type="project" value="RHEA"/>
</dbReference>
<dbReference type="GO" id="GO:0106437">
    <property type="term" value="F:protein-glutamic acid ligase activity, initiating"/>
    <property type="evidence" value="ECO:0007669"/>
    <property type="project" value="RHEA"/>
</dbReference>
<dbReference type="GO" id="GO:0015631">
    <property type="term" value="F:tubulin binding"/>
    <property type="evidence" value="ECO:0000318"/>
    <property type="project" value="GO_Central"/>
</dbReference>
<dbReference type="GO" id="GO:0070740">
    <property type="term" value="F:tubulin-glutamic acid ligase activity"/>
    <property type="evidence" value="ECO:0000250"/>
    <property type="project" value="UniProtKB"/>
</dbReference>
<dbReference type="GO" id="GO:0036211">
    <property type="term" value="P:protein modification process"/>
    <property type="evidence" value="ECO:0007669"/>
    <property type="project" value="InterPro"/>
</dbReference>
<dbReference type="GO" id="GO:0060041">
    <property type="term" value="P:retina development in camera-type eye"/>
    <property type="evidence" value="ECO:0000315"/>
    <property type="project" value="MGI"/>
</dbReference>
<dbReference type="GO" id="GO:0007288">
    <property type="term" value="P:sperm axoneme assembly"/>
    <property type="evidence" value="ECO:0000318"/>
    <property type="project" value="GO_Central"/>
</dbReference>
<dbReference type="FunFam" id="3.30.470.20:FF:000009">
    <property type="entry name" value="tubulin polyglutamylase TTLL5 isoform X1"/>
    <property type="match status" value="1"/>
</dbReference>
<dbReference type="Gene3D" id="3.30.470.20">
    <property type="entry name" value="ATP-grasp fold, B domain"/>
    <property type="match status" value="1"/>
</dbReference>
<dbReference type="InterPro" id="IPR004344">
    <property type="entry name" value="TTL/TTLL_fam"/>
</dbReference>
<dbReference type="PANTHER" id="PTHR12241">
    <property type="entry name" value="TUBULIN POLYGLUTAMYLASE"/>
    <property type="match status" value="1"/>
</dbReference>
<dbReference type="PANTHER" id="PTHR12241:SF145">
    <property type="entry name" value="TUBULIN POLYGLUTAMYLASE TTLL5"/>
    <property type="match status" value="1"/>
</dbReference>
<dbReference type="Pfam" id="PF03133">
    <property type="entry name" value="TTL"/>
    <property type="match status" value="1"/>
</dbReference>
<dbReference type="SUPFAM" id="SSF56059">
    <property type="entry name" value="Glutathione synthetase ATP-binding domain-like"/>
    <property type="match status" value="1"/>
</dbReference>
<dbReference type="PROSITE" id="PS51221">
    <property type="entry name" value="TTL"/>
    <property type="match status" value="1"/>
</dbReference>
<protein>
    <recommendedName>
        <fullName evidence="3">Tubulin polyglutamylase TTLL5</fullName>
        <ecNumber evidence="3">6.3.2.-</ecNumber>
    </recommendedName>
    <alternativeName>
        <fullName evidence="16">SRC1 and TIF2-associated modulatory protein</fullName>
        <shortName evidence="16">STAMP protein</shortName>
    </alternativeName>
    <alternativeName>
        <fullName>Tubulin--tyrosine ligase-like protein 5</fullName>
    </alternativeName>
</protein>
<accession>Q6EMB2</accession>
<accession>B9EGH8</accession>
<accession>B9EGH9</accession>
<accession>Q9BUB0</accession>
<accession>Q9H0G4</accession>
<accession>Q9H7W2</accession>
<accession>Q9P1V5</accession>
<accession>Q9UPZ4</accession>
<gene>
    <name evidence="19" type="primary">TTLL5</name>
    <name type="synonym">KIAA0998</name>
    <name evidence="16" type="synonym">STAMP</name>
</gene>
<sequence>MPIVMARDLEETASSSEDEEVISQEDHPCIMWTGGCRRIPVLVFHADAILTKDNNIRVIGERYHLSYKIVRTDSRLVRSILTAHGFHEVHPSSTDYNLMWTGSHLKPFLLRTLSEAQKVNHFPRSYELTRKDRLYKNIIRMQHTHGFKAFHILPQTFLLPAEYAEFCNSYSKDRGPWIVKPVASSRGRGVYLINNPNQISLEENILVSRYINNPLLIDDFKFDVRLYVLVTSYDPLVIYLYEEGLARFATVRYDQGAKNIRNQFMHLTNYSVNKKSGDYVSCDDPEVEDYGNKWSMSAMLRYLKQEGRDTTALMAHVEDLIIKTIISAELAIATACKTFVPHRSSCFELYGFDVLIDSTLKPWLLEVNLSPSLACDAPLDLKIKASMISDMFTVVGFVCQDPAQRASTRPIYPTFESSRRNPFQKPQRCRPLSASDAEMKNLVGSAREKGPGKLGGSVLGLSMEEIKVLRRVKEENDRRGGFIRIFPTSETWEIYGSYLEHKTSMNYMLATRLFQDRMTADGAPELKIESLNSKAKLHAALYERKLLSLEVRKRRRRSSRLRAMRPKYPVITQPAEMNVKTETESEEEEEVALDNEDEEQEASQEESAGFLRENQAKYTPSLTALVENTPKENSMKVREWNNKGGHCCKLETQELEPKFNLMQILQDNGNLSKMQARIAFSAYLQHVQIRLMKDSGGQTFSASWAAKEDEQMELVVRFLKRASNNLQHSLRMVLPSRRLALLERRRILAHQLGDFIIVYNKETEQMAEKKSKKKVEEEEEDGVNMENFQEFIRQASEAELEEVLTFYTQKNKSASVFLGTHSKISKNNNNYSDSGAKGDHPETIMEEVKIKPPKQQQTTEIHSDKLSRFTTSAEKEAKLVYSNSSSGPTATLQKIPNTHLSSVTTSDLSPGPCHHSSLSQIPSAIPSMPHQPTILLNTVSASASPCLHPGAQNIPSPTGLPRCRSGSHTIGPFSSFQSAAHIYSQKLSRPSSAKAGSCYLNKHHSGIAKTQKEGEDASLYSKRYNQSMVTAELQRLAEKQAARQYSPSSHINLLTQQVTNLNLATGIINRSSASAPPTLRPIISPSGPTWSTQSDPQAPENHSSSPGSRSLQTGGFAWEGEVENNVYSQATGVVPQHKYHPTAGSYQLQFALQQLEQQKLQSRQLLDQSRARHQAIFGSQTLPNSNLWTMNNGAGCRISSATASGQKPTTLPQKVVPPPSSCASLVPKPPPNHEQVLRRATSQKASKGSSAEGQLNGLQSSLNPAAFVPITSSTDPAHTKI</sequence>
<organism>
    <name type="scientific">Homo sapiens</name>
    <name type="common">Human</name>
    <dbReference type="NCBI Taxonomy" id="9606"/>
    <lineage>
        <taxon>Eukaryota</taxon>
        <taxon>Metazoa</taxon>
        <taxon>Chordata</taxon>
        <taxon>Craniata</taxon>
        <taxon>Vertebrata</taxon>
        <taxon>Euteleostomi</taxon>
        <taxon>Mammalia</taxon>
        <taxon>Eutheria</taxon>
        <taxon>Euarchontoglires</taxon>
        <taxon>Primates</taxon>
        <taxon>Haplorrhini</taxon>
        <taxon>Catarrhini</taxon>
        <taxon>Hominidae</taxon>
        <taxon>Homo</taxon>
    </lineage>
</organism>